<sequence>MADNPVYLSVSDLNFYISQKFKNDPYLHKVFLQGELSNFRFRMHSHQYFSLKDDKSKINVVMFRSFFEKLKFKPEEGMKVYVSGYVDVYGPQGSYQFYAQTMEPAGLGALYEQLRQLQEKLAKEGLFNEDHKKRLPLFPDRIAVVTSASGAVIHDIMVTANRRFPHAEIDLYPAKVQGDEAADTIVASLKQIQAQGDKYDVVIIGRGGGSLEDLWPFNEEKVVRQIYAMQMPVISSVGHETDTTLADLVADARAATPTAAAEYATPNLADVLTKIVQLRARLYAAMQANIRAKRQILDRLRKAPVLQEPTRIYDQQIQQVDMLSHRLNQAISNQLQHDRSSVRLLQERLKALNPGRRLEQLERERTFIVANLFSTMTAYLKDQRNKLNRTMQQLDDISPLKTIGRGYVYTTDQEGNTVTSVDKLEIDEKLKLHFKDGQVQVNVENIRREKDGNQEK</sequence>
<name>EX7L_LACGA</name>
<reference key="1">
    <citation type="journal article" date="2006" name="Proc. Natl. Acad. Sci. U.S.A.">
        <title>Comparative genomics of the lactic acid bacteria.</title>
        <authorList>
            <person name="Makarova K.S."/>
            <person name="Slesarev A."/>
            <person name="Wolf Y.I."/>
            <person name="Sorokin A."/>
            <person name="Mirkin B."/>
            <person name="Koonin E.V."/>
            <person name="Pavlov A."/>
            <person name="Pavlova N."/>
            <person name="Karamychev V."/>
            <person name="Polouchine N."/>
            <person name="Shakhova V."/>
            <person name="Grigoriev I."/>
            <person name="Lou Y."/>
            <person name="Rohksar D."/>
            <person name="Lucas S."/>
            <person name="Huang K."/>
            <person name="Goodstein D.M."/>
            <person name="Hawkins T."/>
            <person name="Plengvidhya V."/>
            <person name="Welker D."/>
            <person name="Hughes J."/>
            <person name="Goh Y."/>
            <person name="Benson A."/>
            <person name="Baldwin K."/>
            <person name="Lee J.-H."/>
            <person name="Diaz-Muniz I."/>
            <person name="Dosti B."/>
            <person name="Smeianov V."/>
            <person name="Wechter W."/>
            <person name="Barabote R."/>
            <person name="Lorca G."/>
            <person name="Altermann E."/>
            <person name="Barrangou R."/>
            <person name="Ganesan B."/>
            <person name="Xie Y."/>
            <person name="Rawsthorne H."/>
            <person name="Tamir D."/>
            <person name="Parker C."/>
            <person name="Breidt F."/>
            <person name="Broadbent J.R."/>
            <person name="Hutkins R."/>
            <person name="O'Sullivan D."/>
            <person name="Steele J."/>
            <person name="Unlu G."/>
            <person name="Saier M.H. Jr."/>
            <person name="Klaenhammer T."/>
            <person name="Richardson P."/>
            <person name="Kozyavkin S."/>
            <person name="Weimer B.C."/>
            <person name="Mills D.A."/>
        </authorList>
    </citation>
    <scope>NUCLEOTIDE SEQUENCE [LARGE SCALE GENOMIC DNA]</scope>
    <source>
        <strain>ATCC 33323 / DSM 20243 / BCRC 14619 / CIP 102991 / JCM 1131 / KCTC 3163 / NCIMB 11718 / NCTC 13722 / AM63</strain>
    </source>
</reference>
<feature type="chain" id="PRO_0000303793" description="Exodeoxyribonuclease 7 large subunit">
    <location>
        <begin position="1"/>
        <end position="456"/>
    </location>
</feature>
<organism>
    <name type="scientific">Lactobacillus gasseri (strain ATCC 33323 / DSM 20243 / BCRC 14619 / CIP 102991 / JCM 1131 / KCTC 3163 / NCIMB 11718 / NCTC 13722 / AM63)</name>
    <dbReference type="NCBI Taxonomy" id="324831"/>
    <lineage>
        <taxon>Bacteria</taxon>
        <taxon>Bacillati</taxon>
        <taxon>Bacillota</taxon>
        <taxon>Bacilli</taxon>
        <taxon>Lactobacillales</taxon>
        <taxon>Lactobacillaceae</taxon>
        <taxon>Lactobacillus</taxon>
    </lineage>
</organism>
<proteinExistence type="inferred from homology"/>
<keyword id="KW-0963">Cytoplasm</keyword>
<keyword id="KW-0269">Exonuclease</keyword>
<keyword id="KW-0378">Hydrolase</keyword>
<keyword id="KW-0540">Nuclease</keyword>
<gene>
    <name evidence="1" type="primary">xseA</name>
    <name type="ordered locus">LGAS_0752</name>
</gene>
<comment type="function">
    <text evidence="1">Bidirectionally degrades single-stranded DNA into large acid-insoluble oligonucleotides, which are then degraded further into small acid-soluble oligonucleotides.</text>
</comment>
<comment type="catalytic activity">
    <reaction evidence="1">
        <text>Exonucleolytic cleavage in either 5'- to 3'- or 3'- to 5'-direction to yield nucleoside 5'-phosphates.</text>
        <dbReference type="EC" id="3.1.11.6"/>
    </reaction>
</comment>
<comment type="subunit">
    <text evidence="1">Heterooligomer composed of large and small subunits.</text>
</comment>
<comment type="subcellular location">
    <subcellularLocation>
        <location evidence="1">Cytoplasm</location>
    </subcellularLocation>
</comment>
<comment type="similarity">
    <text evidence="1">Belongs to the XseA family.</text>
</comment>
<protein>
    <recommendedName>
        <fullName evidence="1">Exodeoxyribonuclease 7 large subunit</fullName>
        <ecNumber evidence="1">3.1.11.6</ecNumber>
    </recommendedName>
    <alternativeName>
        <fullName evidence="1">Exodeoxyribonuclease VII large subunit</fullName>
        <shortName evidence="1">Exonuclease VII large subunit</shortName>
    </alternativeName>
</protein>
<evidence type="ECO:0000255" key="1">
    <source>
        <dbReference type="HAMAP-Rule" id="MF_00378"/>
    </source>
</evidence>
<accession>Q044H9</accession>
<dbReference type="EC" id="3.1.11.6" evidence="1"/>
<dbReference type="EMBL" id="CP000413">
    <property type="protein sequence ID" value="ABJ60143.1"/>
    <property type="molecule type" value="Genomic_DNA"/>
</dbReference>
<dbReference type="RefSeq" id="WP_003647536.1">
    <property type="nucleotide sequence ID" value="NZ_WBMG01000005.1"/>
</dbReference>
<dbReference type="SMR" id="Q044H9"/>
<dbReference type="GeneID" id="29638979"/>
<dbReference type="KEGG" id="lga:LGAS_0752"/>
<dbReference type="HOGENOM" id="CLU_023625_3_1_9"/>
<dbReference type="BioCyc" id="LGAS324831:G1G6Y-746-MONOMER"/>
<dbReference type="Proteomes" id="UP000000664">
    <property type="component" value="Chromosome"/>
</dbReference>
<dbReference type="GO" id="GO:0005737">
    <property type="term" value="C:cytoplasm"/>
    <property type="evidence" value="ECO:0007669"/>
    <property type="project" value="UniProtKB-SubCell"/>
</dbReference>
<dbReference type="GO" id="GO:0009318">
    <property type="term" value="C:exodeoxyribonuclease VII complex"/>
    <property type="evidence" value="ECO:0007669"/>
    <property type="project" value="InterPro"/>
</dbReference>
<dbReference type="GO" id="GO:0008855">
    <property type="term" value="F:exodeoxyribonuclease VII activity"/>
    <property type="evidence" value="ECO:0007669"/>
    <property type="project" value="UniProtKB-UniRule"/>
</dbReference>
<dbReference type="GO" id="GO:0003676">
    <property type="term" value="F:nucleic acid binding"/>
    <property type="evidence" value="ECO:0007669"/>
    <property type="project" value="InterPro"/>
</dbReference>
<dbReference type="GO" id="GO:0006308">
    <property type="term" value="P:DNA catabolic process"/>
    <property type="evidence" value="ECO:0007669"/>
    <property type="project" value="UniProtKB-UniRule"/>
</dbReference>
<dbReference type="CDD" id="cd04489">
    <property type="entry name" value="ExoVII_LU_OBF"/>
    <property type="match status" value="1"/>
</dbReference>
<dbReference type="HAMAP" id="MF_00378">
    <property type="entry name" value="Exonuc_7_L"/>
    <property type="match status" value="1"/>
</dbReference>
<dbReference type="InterPro" id="IPR003753">
    <property type="entry name" value="Exonuc_VII_L"/>
</dbReference>
<dbReference type="InterPro" id="IPR020579">
    <property type="entry name" value="Exonuc_VII_lsu_C"/>
</dbReference>
<dbReference type="InterPro" id="IPR025824">
    <property type="entry name" value="OB-fold_nuc-bd_dom"/>
</dbReference>
<dbReference type="NCBIfam" id="TIGR00237">
    <property type="entry name" value="xseA"/>
    <property type="match status" value="1"/>
</dbReference>
<dbReference type="PANTHER" id="PTHR30008">
    <property type="entry name" value="EXODEOXYRIBONUCLEASE 7 LARGE SUBUNIT"/>
    <property type="match status" value="1"/>
</dbReference>
<dbReference type="PANTHER" id="PTHR30008:SF0">
    <property type="entry name" value="EXODEOXYRIBONUCLEASE 7 LARGE SUBUNIT"/>
    <property type="match status" value="1"/>
</dbReference>
<dbReference type="Pfam" id="PF02601">
    <property type="entry name" value="Exonuc_VII_L"/>
    <property type="match status" value="1"/>
</dbReference>
<dbReference type="Pfam" id="PF13742">
    <property type="entry name" value="tRNA_anti_2"/>
    <property type="match status" value="1"/>
</dbReference>